<reference evidence="6" key="1">
    <citation type="journal article" date="2005" name="Biochem. J.">
        <title>Cloning of ABCA17, a novel rodent sperm-specific ABC (ATP-binding cassette) transporter that regulates intracellular lipid metabolism.</title>
        <authorList>
            <person name="Ban N."/>
            <person name="Sasaki M."/>
            <person name="Sakai H."/>
            <person name="Ueda K."/>
            <person name="Inagaki N."/>
        </authorList>
    </citation>
    <scope>NUCLEOTIDE SEQUENCE [MRNA]</scope>
</reference>
<reference evidence="7" key="2">
    <citation type="journal article" date="2004" name="Nature">
        <title>Genome sequence of the Brown Norway rat yields insights into mammalian evolution.</title>
        <authorList>
            <person name="Gibbs R.A."/>
            <person name="Weinstock G.M."/>
            <person name="Metzker M.L."/>
            <person name="Muzny D.M."/>
            <person name="Sodergren E.J."/>
            <person name="Scherer S."/>
            <person name="Scott G."/>
            <person name="Steffen D."/>
            <person name="Worley K.C."/>
            <person name="Burch P.E."/>
            <person name="Okwuonu G."/>
            <person name="Hines S."/>
            <person name="Lewis L."/>
            <person name="Deramo C."/>
            <person name="Delgado O."/>
            <person name="Dugan-Rocha S."/>
            <person name="Miner G."/>
            <person name="Morgan M."/>
            <person name="Hawes A."/>
            <person name="Gill R."/>
            <person name="Holt R.A."/>
            <person name="Adams M.D."/>
            <person name="Amanatides P.G."/>
            <person name="Baden-Tillson H."/>
            <person name="Barnstead M."/>
            <person name="Chin S."/>
            <person name="Evans C.A."/>
            <person name="Ferriera S."/>
            <person name="Fosler C."/>
            <person name="Glodek A."/>
            <person name="Gu Z."/>
            <person name="Jennings D."/>
            <person name="Kraft C.L."/>
            <person name="Nguyen T."/>
            <person name="Pfannkoch C.M."/>
            <person name="Sitter C."/>
            <person name="Sutton G.G."/>
            <person name="Venter J.C."/>
            <person name="Woodage T."/>
            <person name="Smith D."/>
            <person name="Lee H.-M."/>
            <person name="Gustafson E."/>
            <person name="Cahill P."/>
            <person name="Kana A."/>
            <person name="Doucette-Stamm L."/>
            <person name="Weinstock K."/>
            <person name="Fechtel K."/>
            <person name="Weiss R.B."/>
            <person name="Dunn D.M."/>
            <person name="Green E.D."/>
            <person name="Blakesley R.W."/>
            <person name="Bouffard G.G."/>
            <person name="De Jong P.J."/>
            <person name="Osoegawa K."/>
            <person name="Zhu B."/>
            <person name="Marra M."/>
            <person name="Schein J."/>
            <person name="Bosdet I."/>
            <person name="Fjell C."/>
            <person name="Jones S."/>
            <person name="Krzywinski M."/>
            <person name="Mathewson C."/>
            <person name="Siddiqui A."/>
            <person name="Wye N."/>
            <person name="McPherson J."/>
            <person name="Zhao S."/>
            <person name="Fraser C.M."/>
            <person name="Shetty J."/>
            <person name="Shatsman S."/>
            <person name="Geer K."/>
            <person name="Chen Y."/>
            <person name="Abramzon S."/>
            <person name="Nierman W.C."/>
            <person name="Havlak P.H."/>
            <person name="Chen R."/>
            <person name="Durbin K.J."/>
            <person name="Egan A."/>
            <person name="Ren Y."/>
            <person name="Song X.-Z."/>
            <person name="Li B."/>
            <person name="Liu Y."/>
            <person name="Qin X."/>
            <person name="Cawley S."/>
            <person name="Cooney A.J."/>
            <person name="D'Souza L.M."/>
            <person name="Martin K."/>
            <person name="Wu J.Q."/>
            <person name="Gonzalez-Garay M.L."/>
            <person name="Jackson A.R."/>
            <person name="Kalafus K.J."/>
            <person name="McLeod M.P."/>
            <person name="Milosavljevic A."/>
            <person name="Virk D."/>
            <person name="Volkov A."/>
            <person name="Wheeler D.A."/>
            <person name="Zhang Z."/>
            <person name="Bailey J.A."/>
            <person name="Eichler E.E."/>
            <person name="Tuzun E."/>
            <person name="Birney E."/>
            <person name="Mongin E."/>
            <person name="Ureta-Vidal A."/>
            <person name="Woodwark C."/>
            <person name="Zdobnov E."/>
            <person name="Bork P."/>
            <person name="Suyama M."/>
            <person name="Torrents D."/>
            <person name="Alexandersson M."/>
            <person name="Trask B.J."/>
            <person name="Young J.M."/>
            <person name="Huang H."/>
            <person name="Wang H."/>
            <person name="Xing H."/>
            <person name="Daniels S."/>
            <person name="Gietzen D."/>
            <person name="Schmidt J."/>
            <person name="Stevens K."/>
            <person name="Vitt U."/>
            <person name="Wingrove J."/>
            <person name="Camara F."/>
            <person name="Mar Alba M."/>
            <person name="Abril J.F."/>
            <person name="Guigo R."/>
            <person name="Smit A."/>
            <person name="Dubchak I."/>
            <person name="Rubin E.M."/>
            <person name="Couronne O."/>
            <person name="Poliakov A."/>
            <person name="Huebner N."/>
            <person name="Ganten D."/>
            <person name="Goesele C."/>
            <person name="Hummel O."/>
            <person name="Kreitler T."/>
            <person name="Lee Y.-A."/>
            <person name="Monti J."/>
            <person name="Schulz H."/>
            <person name="Zimdahl H."/>
            <person name="Himmelbauer H."/>
            <person name="Lehrach H."/>
            <person name="Jacob H.J."/>
            <person name="Bromberg S."/>
            <person name="Gullings-Handley J."/>
            <person name="Jensen-Seaman M.I."/>
            <person name="Kwitek A.E."/>
            <person name="Lazar J."/>
            <person name="Pasko D."/>
            <person name="Tonellato P.J."/>
            <person name="Twigger S."/>
            <person name="Ponting C.P."/>
            <person name="Duarte J.M."/>
            <person name="Rice S."/>
            <person name="Goodstadt L."/>
            <person name="Beatson S.A."/>
            <person name="Emes R.D."/>
            <person name="Winter E.E."/>
            <person name="Webber C."/>
            <person name="Brandt P."/>
            <person name="Nyakatura G."/>
            <person name="Adetobi M."/>
            <person name="Chiaromonte F."/>
            <person name="Elnitski L."/>
            <person name="Eswara P."/>
            <person name="Hardison R.C."/>
            <person name="Hou M."/>
            <person name="Kolbe D."/>
            <person name="Makova K."/>
            <person name="Miller W."/>
            <person name="Nekrutenko A."/>
            <person name="Riemer C."/>
            <person name="Schwartz S."/>
            <person name="Taylor J."/>
            <person name="Yang S."/>
            <person name="Zhang Y."/>
            <person name="Lindpaintner K."/>
            <person name="Andrews T.D."/>
            <person name="Caccamo M."/>
            <person name="Clamp M."/>
            <person name="Clarke L."/>
            <person name="Curwen V."/>
            <person name="Durbin R.M."/>
            <person name="Eyras E."/>
            <person name="Searle S.M."/>
            <person name="Cooper G.M."/>
            <person name="Batzoglou S."/>
            <person name="Brudno M."/>
            <person name="Sidow A."/>
            <person name="Stone E.A."/>
            <person name="Payseur B.A."/>
            <person name="Bourque G."/>
            <person name="Lopez-Otin C."/>
            <person name="Puente X.S."/>
            <person name="Chakrabarti K."/>
            <person name="Chatterji S."/>
            <person name="Dewey C."/>
            <person name="Pachter L."/>
            <person name="Bray N."/>
            <person name="Yap V.B."/>
            <person name="Caspi A."/>
            <person name="Tesler G."/>
            <person name="Pevzner P.A."/>
            <person name="Haussler D."/>
            <person name="Roskin K.M."/>
            <person name="Baertsch R."/>
            <person name="Clawson H."/>
            <person name="Furey T.S."/>
            <person name="Hinrichs A.S."/>
            <person name="Karolchik D."/>
            <person name="Kent W.J."/>
            <person name="Rosenbloom K.R."/>
            <person name="Trumbower H."/>
            <person name="Weirauch M."/>
            <person name="Cooper D.N."/>
            <person name="Stenson P.D."/>
            <person name="Ma B."/>
            <person name="Brent M."/>
            <person name="Arumugam M."/>
            <person name="Shteynberg D."/>
            <person name="Copley R.R."/>
            <person name="Taylor M.S."/>
            <person name="Riethman H."/>
            <person name="Mudunuri U."/>
            <person name="Peterson J."/>
            <person name="Guyer M."/>
            <person name="Felsenfeld A."/>
            <person name="Old S."/>
            <person name="Mockrin S."/>
            <person name="Collins F.S."/>
        </authorList>
    </citation>
    <scope>NUCLEOTIDE SEQUENCE [LARGE SCALE GENOMIC DNA]</scope>
    <source>
        <strain evidence="7">Brown Norway</strain>
    </source>
</reference>
<keyword id="KW-0067">ATP-binding</keyword>
<keyword id="KW-0963">Cytoplasm</keyword>
<keyword id="KW-0256">Endoplasmic reticulum</keyword>
<keyword id="KW-0325">Glycoprotein</keyword>
<keyword id="KW-0443">Lipid metabolism</keyword>
<keyword id="KW-0445">Lipid transport</keyword>
<keyword id="KW-0472">Membrane</keyword>
<keyword id="KW-0547">Nucleotide-binding</keyword>
<keyword id="KW-1185">Reference proteome</keyword>
<keyword id="KW-0677">Repeat</keyword>
<keyword id="KW-0812">Transmembrane</keyword>
<keyword id="KW-1133">Transmembrane helix</keyword>
<keyword id="KW-0813">Transport</keyword>
<feature type="chain" id="PRO_0000436477" description="ATP-binding cassette sub-family A member 17">
    <location>
        <begin position="1"/>
        <end position="1773"/>
    </location>
</feature>
<feature type="transmembrane region" description="Helical" evidence="2">
    <location>
        <begin position="22"/>
        <end position="42"/>
    </location>
</feature>
<feature type="transmembrane region" description="Helical" evidence="2">
    <location>
        <begin position="262"/>
        <end position="282"/>
    </location>
</feature>
<feature type="transmembrane region" description="Helical" evidence="2">
    <location>
        <begin position="306"/>
        <end position="326"/>
    </location>
</feature>
<feature type="transmembrane region" description="Helical" evidence="2">
    <location>
        <begin position="342"/>
        <end position="362"/>
    </location>
</feature>
<feature type="transmembrane region" description="Helical" evidence="2">
    <location>
        <begin position="372"/>
        <end position="392"/>
    </location>
</feature>
<feature type="transmembrane region" description="Helical" evidence="2">
    <location>
        <begin position="403"/>
        <end position="423"/>
    </location>
</feature>
<feature type="transmembrane region" description="Helical" evidence="2">
    <location>
        <begin position="444"/>
        <end position="464"/>
    </location>
</feature>
<feature type="transmembrane region" description="Helical" evidence="2">
    <location>
        <begin position="912"/>
        <end position="932"/>
    </location>
</feature>
<feature type="transmembrane region" description="Helical" evidence="2">
    <location>
        <begin position="1088"/>
        <end position="1108"/>
    </location>
</feature>
<feature type="transmembrane region" description="Helical" evidence="2">
    <location>
        <begin position="1134"/>
        <end position="1154"/>
    </location>
</feature>
<feature type="transmembrane region" description="Helical" evidence="2">
    <location>
        <begin position="1166"/>
        <end position="1186"/>
    </location>
</feature>
<feature type="transmembrane region" description="Helical" evidence="2">
    <location>
        <begin position="1198"/>
        <end position="1218"/>
    </location>
</feature>
<feature type="transmembrane region" description="Helical" evidence="2">
    <location>
        <begin position="1236"/>
        <end position="1256"/>
    </location>
</feature>
<feature type="transmembrane region" description="Helical" evidence="2">
    <location>
        <begin position="1293"/>
        <end position="1313"/>
    </location>
</feature>
<feature type="domain" description="ABC transporter 1" evidence="3">
    <location>
        <begin position="525"/>
        <end position="758"/>
    </location>
</feature>
<feature type="domain" description="ABC transporter 2" evidence="3">
    <location>
        <begin position="1369"/>
        <end position="1602"/>
    </location>
</feature>
<feature type="region of interest" description="Disordered" evidence="4">
    <location>
        <begin position="1690"/>
        <end position="1773"/>
    </location>
</feature>
<feature type="compositionally biased region" description="Low complexity" evidence="4">
    <location>
        <begin position="1700"/>
        <end position="1710"/>
    </location>
</feature>
<feature type="compositionally biased region" description="Pro residues" evidence="4">
    <location>
        <begin position="1711"/>
        <end position="1740"/>
    </location>
</feature>
<feature type="compositionally biased region" description="Pro residues" evidence="4">
    <location>
        <begin position="1763"/>
        <end position="1773"/>
    </location>
</feature>
<feature type="binding site" evidence="3">
    <location>
        <begin position="561"/>
        <end position="568"/>
    </location>
    <ligand>
        <name>ATP</name>
        <dbReference type="ChEBI" id="CHEBI:30616"/>
    </ligand>
</feature>
<feature type="binding site" evidence="3">
    <location>
        <begin position="1404"/>
        <end position="1411"/>
    </location>
    <ligand>
        <name>ATP</name>
        <dbReference type="ChEBI" id="CHEBI:30616"/>
    </ligand>
</feature>
<feature type="glycosylation site" description="N-linked (GlcNAc...) asparagine" evidence="2">
    <location>
        <position position="340"/>
    </location>
</feature>
<feature type="glycosylation site" description="N-linked (GlcNAc...) asparagine" evidence="2">
    <location>
        <position position="615"/>
    </location>
</feature>
<feature type="glycosylation site" description="N-linked (GlcNAc...) asparagine" evidence="2">
    <location>
        <position position="1340"/>
    </location>
</feature>
<feature type="sequence conflict" description="In Ref. 1; BAD97417." evidence="5" ref="1">
    <original>T</original>
    <variation>P</variation>
    <location>
        <position position="341"/>
    </location>
</feature>
<feature type="sequence conflict" description="In Ref. 1; BAD97417." evidence="5" ref="1">
    <original>I</original>
    <variation>M</variation>
    <location>
        <position position="664"/>
    </location>
</feature>
<feature type="sequence conflict" description="In Ref. 1; BAD97417." evidence="5" ref="1">
    <original>K</original>
    <variation>I</variation>
    <location>
        <position position="1222"/>
    </location>
</feature>
<organism evidence="7">
    <name type="scientific">Rattus norvegicus</name>
    <name type="common">Rat</name>
    <dbReference type="NCBI Taxonomy" id="10116"/>
    <lineage>
        <taxon>Eukaryota</taxon>
        <taxon>Metazoa</taxon>
        <taxon>Chordata</taxon>
        <taxon>Craniata</taxon>
        <taxon>Vertebrata</taxon>
        <taxon>Euteleostomi</taxon>
        <taxon>Mammalia</taxon>
        <taxon>Eutheria</taxon>
        <taxon>Euarchontoglires</taxon>
        <taxon>Glires</taxon>
        <taxon>Rodentia</taxon>
        <taxon>Myomorpha</taxon>
        <taxon>Muroidea</taxon>
        <taxon>Muridae</taxon>
        <taxon>Murinae</taxon>
        <taxon>Rattus</taxon>
    </lineage>
</organism>
<protein>
    <recommendedName>
        <fullName evidence="8">ATP-binding cassette sub-family A member 17</fullName>
    </recommendedName>
</protein>
<name>ABCAH_RAT</name>
<sequence length="1773" mass="199859">MAPFKKLKLLLWKNFVLKKRKTLVTVLETLMPVLFSAIVLYLRLNSMPRNKANTNYPAVDVSLLPVYFHNYPLKSKFQLVYIPSKSETLKAVTEVVEQTFAVDFEVLGFPSVSLFENYIIKDPKSFYVLVGIVFHHDFNSSNEPLPLVVKYDLRFSYVQRNSISPPRHLFFQEDIEGWCTAFLYPPNLSQAPREFSYADGGHPGYNKEGFLAIQHAVDKAIMLHHAPKAALDMFKNLQVSVQRFPSGSHIQDPFLVILQNEFPLLLMLSFICVELIITNSILLEKERKQKEYMYLMGLENWLHWVAWFITFFLSALVTVSGMTVLFCTKMNGVAVFRNSNTTLIFIFLMCFAIATIFFAFMMSTFFQRAHVGTVIGGIVFFFTYLPYMYITFSYHQRTYSQKILSCLFSNVAMAMGVRFISLFEAEGTGIQWRNMGSVWGDFSFTQVLVMLLLDSFLYCLVAFLVESLFPRKIGMPKSWYIFAKCPLWRKKSFPVIPPLLVIGDPEKTSKGDFLQDEPAGHINAIEIQHLYKVFYTGRSKCIAVKDLSMNLYKGQITVLLGHNGAGKTTVCSVLTGLIPPSKGHAYIHGCEISKDMVRIRKNVGWCPQHDILFDNFTVTDHLYFYGQLKGLSHQDCHEKIEEMLHTLGLEDKRNSRSKFLSGGIKRKLAIGIALIAGSKVLILDEPTSGMDSSSRRAIWDLLQQQKGDRTVLLTTHFMDEADLLGDRIAILAKGELQCCGTPSFLKQKYGAGYYMTIIKTPLCDTEKLAKVIYHHIPNAILESRIGEEMIFTLPKKAMPRFEALFADLEQRQTELGISTFGASVTTMEEVFIRVCKLADPSTNVLTEKRPSLRHLPRNHRVPVDRIKCLHSRIFSLSSDQPIRLNTGFSLLCQQFYAMLLKKVAFSRRNWMLVLSVQILLPLVIIMLSLSFFNFKLRKLDNVPLELTLQTYGQTIVPFFIAENSRLDPQLSDNFVKMLVAAGQVPLRIQGSVENFLLKKAKEAPEDFDKLYVVAASFEDVNDHTTVKALFNNQAYHSPSLALALVDNVLFKLLSGANASITTTNYPQPQTAMELSETILYQGPKGHYLVVNFLFGIAFLSSSFSILTVGEKSIKSKNLQFLSGVSMAAFWLSALLWDLISFLVPTLLLVLVFFWYKEEAFAHPQSIPAVVLIMMLYGWAIIPLVYTVSFSFKTPGSGCVKLVAMLTFLSISPVVLVTVTSEKDLGYTELSDTLDHIFLIFPGHCLGMAFSNLYYNFEIKKFCNAKNLSDIDCNDVLEGYVVQKNIYAWESLGIGKYLTALAILGPVYITLLFLTEANAFCALKARLSGFFCKQKLRMLLNVTGAEDEDVLEEAENIKYHLDTLIKKSPLVVKELSKVYKEKVPLLAVNKVSFVVKEKECFGLLGLNGAGKTSIFNMLTREQPITSGDAFVKGFNIRTDMAKVQQWIGYCPEFDALLNFMTGREMLVMHARIRGIPECHIKTCVDMILENLLMCVYADKLVKTYSDGNKRVLSTAIALLGEPTVILLDEPSTGMDPVARRLVWDAVGRVRESGKTIVITSHSMEECEALCTRLAIMVQGQFKCLGSPQHLKSRFGSGYSLQAKVRRKWQQQMLEEFKAFVDLTFPGSSLEDEHQSMVQYYLPGQNLSWAKVFGIMEQAKKDYVLEDYSISQLSLEDIFLSFTRPVPDTKENIQQGQAALDSSLSPSNSRPISSPPSSPPSSPPSSPPSRPPSRPSQPPSRPPSRHPSSPSQPPSRPPSRHPSSPSQPPSEPVLL</sequence>
<dbReference type="EMBL" id="AB196699">
    <property type="protein sequence ID" value="BAD97417.1"/>
    <property type="molecule type" value="mRNA"/>
</dbReference>
<dbReference type="EMBL" id="AC098526">
    <property type="status" value="NOT_ANNOTATED_CDS"/>
    <property type="molecule type" value="Genomic_DNA"/>
</dbReference>
<dbReference type="RefSeq" id="NP_001026807.1">
    <property type="nucleotide sequence ID" value="NM_001031637.1"/>
</dbReference>
<dbReference type="RefSeq" id="XP_006245989.1">
    <property type="nucleotide sequence ID" value="XM_006245927.5"/>
</dbReference>
<dbReference type="RefSeq" id="XP_006245990.1">
    <property type="nucleotide sequence ID" value="XM_006245928.5"/>
</dbReference>
<dbReference type="SMR" id="E9PU17"/>
<dbReference type="FunCoup" id="E9PU17">
    <property type="interactions" value="108"/>
</dbReference>
<dbReference type="IntAct" id="E9PU17">
    <property type="interactions" value="2"/>
</dbReference>
<dbReference type="STRING" id="10116.ENSRNOP00000057544"/>
<dbReference type="GlyCosmos" id="E9PU17">
    <property type="glycosylation" value="3 sites, No reported glycans"/>
</dbReference>
<dbReference type="GlyGen" id="E9PU17">
    <property type="glycosylation" value="3 sites"/>
</dbReference>
<dbReference type="PaxDb" id="10116-ENSRNOP00000057544"/>
<dbReference type="PeptideAtlas" id="E9PU17"/>
<dbReference type="Ensembl" id="ENSRNOT00000060818.3">
    <property type="protein sequence ID" value="ENSRNOP00000057544.2"/>
    <property type="gene ID" value="ENSRNOG00000039656.4"/>
</dbReference>
<dbReference type="GeneID" id="287112"/>
<dbReference type="KEGG" id="rno:287112"/>
<dbReference type="UCSC" id="RGD:1560494">
    <property type="organism name" value="rat"/>
</dbReference>
<dbReference type="AGR" id="RGD:1560494"/>
<dbReference type="CTD" id="381072"/>
<dbReference type="RGD" id="1560494">
    <property type="gene designation" value="Abca17"/>
</dbReference>
<dbReference type="eggNOG" id="KOG0059">
    <property type="taxonomic scope" value="Eukaryota"/>
</dbReference>
<dbReference type="GeneTree" id="ENSGT00940000163933"/>
<dbReference type="HOGENOM" id="CLU_000604_19_1_1"/>
<dbReference type="InParanoid" id="E9PU17"/>
<dbReference type="OMA" id="QIMGICP"/>
<dbReference type="OrthoDB" id="6512918at2759"/>
<dbReference type="TreeFam" id="TF105191"/>
<dbReference type="PRO" id="PR:E9PU17"/>
<dbReference type="Proteomes" id="UP000002494">
    <property type="component" value="Chromosome 10"/>
</dbReference>
<dbReference type="Bgee" id="ENSRNOG00000039656">
    <property type="expression patterns" value="Expressed in testis and 3 other cell types or tissues"/>
</dbReference>
<dbReference type="GO" id="GO:0005789">
    <property type="term" value="C:endoplasmic reticulum membrane"/>
    <property type="evidence" value="ECO:0007669"/>
    <property type="project" value="UniProtKB-SubCell"/>
</dbReference>
<dbReference type="GO" id="GO:0043231">
    <property type="term" value="C:intracellular membrane-bounded organelle"/>
    <property type="evidence" value="ECO:0000318"/>
    <property type="project" value="GO_Central"/>
</dbReference>
<dbReference type="GO" id="GO:0140359">
    <property type="term" value="F:ABC-type transporter activity"/>
    <property type="evidence" value="ECO:0007669"/>
    <property type="project" value="InterPro"/>
</dbReference>
<dbReference type="GO" id="GO:0005524">
    <property type="term" value="F:ATP binding"/>
    <property type="evidence" value="ECO:0007669"/>
    <property type="project" value="UniProtKB-KW"/>
</dbReference>
<dbReference type="GO" id="GO:0016887">
    <property type="term" value="F:ATP hydrolysis activity"/>
    <property type="evidence" value="ECO:0007669"/>
    <property type="project" value="InterPro"/>
</dbReference>
<dbReference type="GO" id="GO:0042626">
    <property type="term" value="F:ATPase-coupled transmembrane transporter activity"/>
    <property type="evidence" value="ECO:0000318"/>
    <property type="project" value="GO_Central"/>
</dbReference>
<dbReference type="GO" id="GO:0005319">
    <property type="term" value="F:lipid transporter activity"/>
    <property type="evidence" value="ECO:0000318"/>
    <property type="project" value="GO_Central"/>
</dbReference>
<dbReference type="GO" id="GO:0006869">
    <property type="term" value="P:lipid transport"/>
    <property type="evidence" value="ECO:0000318"/>
    <property type="project" value="GO_Central"/>
</dbReference>
<dbReference type="GO" id="GO:0006638">
    <property type="term" value="P:neutral lipid metabolic process"/>
    <property type="evidence" value="ECO:0007669"/>
    <property type="project" value="Ensembl"/>
</dbReference>
<dbReference type="CDD" id="cd03263">
    <property type="entry name" value="ABC_subfamily_A"/>
    <property type="match status" value="2"/>
</dbReference>
<dbReference type="FunFam" id="3.40.50.300:FF:000327">
    <property type="entry name" value="ATP-binding cassette sub-family A member 3"/>
    <property type="match status" value="1"/>
</dbReference>
<dbReference type="FunFam" id="3.40.50.300:FF:000465">
    <property type="entry name" value="ATP-binding cassette, sub-family A (ABC1), member 3"/>
    <property type="match status" value="1"/>
</dbReference>
<dbReference type="Gene3D" id="3.40.50.300">
    <property type="entry name" value="P-loop containing nucleotide triphosphate hydrolases"/>
    <property type="match status" value="2"/>
</dbReference>
<dbReference type="InterPro" id="IPR003593">
    <property type="entry name" value="AAA+_ATPase"/>
</dbReference>
<dbReference type="InterPro" id="IPR013525">
    <property type="entry name" value="ABC2_TM"/>
</dbReference>
<dbReference type="InterPro" id="IPR003439">
    <property type="entry name" value="ABC_transporter-like_ATP-bd"/>
</dbReference>
<dbReference type="InterPro" id="IPR026082">
    <property type="entry name" value="ABCA"/>
</dbReference>
<dbReference type="InterPro" id="IPR027417">
    <property type="entry name" value="P-loop_NTPase"/>
</dbReference>
<dbReference type="InterPro" id="IPR056264">
    <property type="entry name" value="R2_ABCA1-4-like"/>
</dbReference>
<dbReference type="PANTHER" id="PTHR19229:SF117">
    <property type="entry name" value="ATP-BINDING CASSETTE SUB-FAMILY A MEMBER 17"/>
    <property type="match status" value="1"/>
</dbReference>
<dbReference type="PANTHER" id="PTHR19229">
    <property type="entry name" value="ATP-BINDING CASSETTE TRANSPORTER SUBFAMILY A ABCA"/>
    <property type="match status" value="1"/>
</dbReference>
<dbReference type="Pfam" id="PF12698">
    <property type="entry name" value="ABC2_membrane_3"/>
    <property type="match status" value="2"/>
</dbReference>
<dbReference type="Pfam" id="PF00005">
    <property type="entry name" value="ABC_tran"/>
    <property type="match status" value="2"/>
</dbReference>
<dbReference type="Pfam" id="PF23321">
    <property type="entry name" value="R1_ABCA1"/>
    <property type="match status" value="1"/>
</dbReference>
<dbReference type="SMART" id="SM00382">
    <property type="entry name" value="AAA"/>
    <property type="match status" value="2"/>
</dbReference>
<dbReference type="SUPFAM" id="SSF52540">
    <property type="entry name" value="P-loop containing nucleoside triphosphate hydrolases"/>
    <property type="match status" value="2"/>
</dbReference>
<dbReference type="PROSITE" id="PS50893">
    <property type="entry name" value="ABC_TRANSPORTER_2"/>
    <property type="match status" value="2"/>
</dbReference>
<evidence type="ECO:0000250" key="1">
    <source>
        <dbReference type="UniProtKB" id="E9PX95"/>
    </source>
</evidence>
<evidence type="ECO:0000255" key="2"/>
<evidence type="ECO:0000255" key="3">
    <source>
        <dbReference type="PROSITE-ProRule" id="PRU00434"/>
    </source>
</evidence>
<evidence type="ECO:0000256" key="4">
    <source>
        <dbReference type="SAM" id="MobiDB-lite"/>
    </source>
</evidence>
<evidence type="ECO:0000305" key="5"/>
<evidence type="ECO:0000312" key="6">
    <source>
        <dbReference type="EMBL" id="BAD97417.1"/>
    </source>
</evidence>
<evidence type="ECO:0000312" key="7">
    <source>
        <dbReference type="Proteomes" id="UP000002494"/>
    </source>
</evidence>
<evidence type="ECO:0000312" key="8">
    <source>
        <dbReference type="RGD" id="1560494"/>
    </source>
</evidence>
<proteinExistence type="evidence at transcript level"/>
<accession>E9PU17</accession>
<accession>Q4H493</accession>
<comment type="function">
    <text evidence="1">Promotes cholesterol efflux from sperm which renders sperm capable of fertilization. Has also been shown to decrease levels of intracellular esterified neutral lipids including cholesteryl esters, fatty acid esters and triacylglycerols.</text>
</comment>
<comment type="catalytic activity">
    <reaction evidence="1">
        <text>cholesterol(in) + ATP + H2O = cholesterol(out) + ADP + phosphate + H(+)</text>
        <dbReference type="Rhea" id="RHEA:39051"/>
        <dbReference type="ChEBI" id="CHEBI:15377"/>
        <dbReference type="ChEBI" id="CHEBI:15378"/>
        <dbReference type="ChEBI" id="CHEBI:16113"/>
        <dbReference type="ChEBI" id="CHEBI:30616"/>
        <dbReference type="ChEBI" id="CHEBI:43474"/>
        <dbReference type="ChEBI" id="CHEBI:456216"/>
    </reaction>
    <physiologicalReaction direction="left-to-right" evidence="1">
        <dbReference type="Rhea" id="RHEA:39052"/>
    </physiologicalReaction>
</comment>
<comment type="subcellular location">
    <subcellularLocation>
        <location evidence="1">Endoplasmic reticulum membrane</location>
        <topology evidence="2">Multi-pass membrane protein</topology>
    </subcellularLocation>
    <subcellularLocation>
        <location evidence="1">Cytoplasm</location>
    </subcellularLocation>
</comment>
<comment type="PTM">
    <text evidence="1">N-glycosylated.</text>
</comment>
<comment type="similarity">
    <text evidence="5">Belongs to the ABC transporter superfamily. ABCA family.</text>
</comment>
<gene>
    <name evidence="8" type="primary">Abca17</name>
</gene>